<gene>
    <name evidence="1" type="primary">atpG</name>
    <name type="ordered locus">SAV_2882</name>
</gene>
<organism>
    <name type="scientific">Streptomyces avermitilis (strain ATCC 31267 / DSM 46492 / JCM 5070 / NBRC 14893 / NCIMB 12804 / NRRL 8165 / MA-4680)</name>
    <dbReference type="NCBI Taxonomy" id="227882"/>
    <lineage>
        <taxon>Bacteria</taxon>
        <taxon>Bacillati</taxon>
        <taxon>Actinomycetota</taxon>
        <taxon>Actinomycetes</taxon>
        <taxon>Kitasatosporales</taxon>
        <taxon>Streptomycetaceae</taxon>
        <taxon>Streptomyces</taxon>
    </lineage>
</organism>
<evidence type="ECO:0000255" key="1">
    <source>
        <dbReference type="HAMAP-Rule" id="MF_00815"/>
    </source>
</evidence>
<reference key="1">
    <citation type="journal article" date="2001" name="Proc. Natl. Acad. Sci. U.S.A.">
        <title>Genome sequence of an industrial microorganism Streptomyces avermitilis: deducing the ability of producing secondary metabolites.</title>
        <authorList>
            <person name="Omura S."/>
            <person name="Ikeda H."/>
            <person name="Ishikawa J."/>
            <person name="Hanamoto A."/>
            <person name="Takahashi C."/>
            <person name="Shinose M."/>
            <person name="Takahashi Y."/>
            <person name="Horikawa H."/>
            <person name="Nakazawa H."/>
            <person name="Osonoe T."/>
            <person name="Kikuchi H."/>
            <person name="Shiba T."/>
            <person name="Sakaki Y."/>
            <person name="Hattori M."/>
        </authorList>
    </citation>
    <scope>NUCLEOTIDE SEQUENCE [LARGE SCALE GENOMIC DNA]</scope>
    <source>
        <strain>ATCC 31267 / DSM 46492 / JCM 5070 / NBRC 14893 / NCIMB 12804 / NRRL 8165 / MA-4680</strain>
    </source>
</reference>
<reference key="2">
    <citation type="journal article" date="2003" name="Nat. Biotechnol.">
        <title>Complete genome sequence and comparative analysis of the industrial microorganism Streptomyces avermitilis.</title>
        <authorList>
            <person name="Ikeda H."/>
            <person name="Ishikawa J."/>
            <person name="Hanamoto A."/>
            <person name="Shinose M."/>
            <person name="Kikuchi H."/>
            <person name="Shiba T."/>
            <person name="Sakaki Y."/>
            <person name="Hattori M."/>
            <person name="Omura S."/>
        </authorList>
    </citation>
    <scope>NUCLEOTIDE SEQUENCE [LARGE SCALE GENOMIC DNA]</scope>
    <source>
        <strain>ATCC 31267 / DSM 46492 / JCM 5070 / NBRC 14893 / NCIMB 12804 / NRRL 8165 / MA-4680</strain>
    </source>
</reference>
<proteinExistence type="inferred from homology"/>
<sequence>MGAQLRVYKRRIRSVTATKKITKAMEMIAASRVVKAQRKVAASTPYATELTRAVTAVGTGSNTKHPLTTQAETVTRSAVLLLTSDRGLAGAFNSNAIKAAEQLTARLEAEGREVDTYIVGRRGAAHYNFRERKVTELWTGFTDEPTYADAKKVAGPLIEAIEKETADGGVDELHIVYTEFVSMMTQTAIDARLLPLSLEEVAEESSTQGEIRPLYDFEPSAEDVLDALLPRYVESRIYNALLQSAASKHAATRRAMKSATDNAGELINTLSRLANAARQAEITQEISEIVGGASALADATAGSDR</sequence>
<keyword id="KW-0066">ATP synthesis</keyword>
<keyword id="KW-1003">Cell membrane</keyword>
<keyword id="KW-0139">CF(1)</keyword>
<keyword id="KW-0375">Hydrogen ion transport</keyword>
<keyword id="KW-0406">Ion transport</keyword>
<keyword id="KW-0472">Membrane</keyword>
<keyword id="KW-1185">Reference proteome</keyword>
<keyword id="KW-0813">Transport</keyword>
<name>ATPG_STRAW</name>
<protein>
    <recommendedName>
        <fullName evidence="1">ATP synthase gamma chain</fullName>
    </recommendedName>
    <alternativeName>
        <fullName evidence="1">ATP synthase F1 sector gamma subunit</fullName>
    </alternativeName>
    <alternativeName>
        <fullName evidence="1">F-ATPase gamma subunit</fullName>
    </alternativeName>
</protein>
<dbReference type="EMBL" id="BA000030">
    <property type="protein sequence ID" value="BAC70593.1"/>
    <property type="molecule type" value="Genomic_DNA"/>
</dbReference>
<dbReference type="RefSeq" id="WP_010984314.1">
    <property type="nucleotide sequence ID" value="NZ_JZJK01000041.1"/>
</dbReference>
<dbReference type="SMR" id="Q82J83"/>
<dbReference type="GeneID" id="41539968"/>
<dbReference type="KEGG" id="sma:SAVERM_2882"/>
<dbReference type="eggNOG" id="COG0224">
    <property type="taxonomic scope" value="Bacteria"/>
</dbReference>
<dbReference type="HOGENOM" id="CLU_050669_0_0_11"/>
<dbReference type="OrthoDB" id="9812769at2"/>
<dbReference type="Proteomes" id="UP000000428">
    <property type="component" value="Chromosome"/>
</dbReference>
<dbReference type="GO" id="GO:0005886">
    <property type="term" value="C:plasma membrane"/>
    <property type="evidence" value="ECO:0007669"/>
    <property type="project" value="UniProtKB-SubCell"/>
</dbReference>
<dbReference type="GO" id="GO:0045259">
    <property type="term" value="C:proton-transporting ATP synthase complex"/>
    <property type="evidence" value="ECO:0007669"/>
    <property type="project" value="UniProtKB-KW"/>
</dbReference>
<dbReference type="GO" id="GO:0005524">
    <property type="term" value="F:ATP binding"/>
    <property type="evidence" value="ECO:0007669"/>
    <property type="project" value="UniProtKB-UniRule"/>
</dbReference>
<dbReference type="GO" id="GO:0046933">
    <property type="term" value="F:proton-transporting ATP synthase activity, rotational mechanism"/>
    <property type="evidence" value="ECO:0007669"/>
    <property type="project" value="UniProtKB-UniRule"/>
</dbReference>
<dbReference type="GO" id="GO:0042777">
    <property type="term" value="P:proton motive force-driven plasma membrane ATP synthesis"/>
    <property type="evidence" value="ECO:0007669"/>
    <property type="project" value="UniProtKB-UniRule"/>
</dbReference>
<dbReference type="CDD" id="cd12151">
    <property type="entry name" value="F1-ATPase_gamma"/>
    <property type="match status" value="1"/>
</dbReference>
<dbReference type="FunFam" id="1.10.287.80:FF:000010">
    <property type="entry name" value="ATP synthase gamma chain"/>
    <property type="match status" value="1"/>
</dbReference>
<dbReference type="Gene3D" id="3.40.1380.10">
    <property type="match status" value="1"/>
</dbReference>
<dbReference type="Gene3D" id="1.10.287.80">
    <property type="entry name" value="ATP synthase, gamma subunit, helix hairpin domain"/>
    <property type="match status" value="1"/>
</dbReference>
<dbReference type="HAMAP" id="MF_00815">
    <property type="entry name" value="ATP_synth_gamma_bact"/>
    <property type="match status" value="1"/>
</dbReference>
<dbReference type="InterPro" id="IPR035968">
    <property type="entry name" value="ATP_synth_F1_ATPase_gsu"/>
</dbReference>
<dbReference type="InterPro" id="IPR000131">
    <property type="entry name" value="ATP_synth_F1_gsu"/>
</dbReference>
<dbReference type="InterPro" id="IPR023632">
    <property type="entry name" value="ATP_synth_F1_gsu_CS"/>
</dbReference>
<dbReference type="NCBIfam" id="TIGR01146">
    <property type="entry name" value="ATPsyn_F1gamma"/>
    <property type="match status" value="1"/>
</dbReference>
<dbReference type="NCBIfam" id="NF004145">
    <property type="entry name" value="PRK05621.1-2"/>
    <property type="match status" value="1"/>
</dbReference>
<dbReference type="PANTHER" id="PTHR11693">
    <property type="entry name" value="ATP SYNTHASE GAMMA CHAIN"/>
    <property type="match status" value="1"/>
</dbReference>
<dbReference type="PANTHER" id="PTHR11693:SF22">
    <property type="entry name" value="ATP SYNTHASE SUBUNIT GAMMA, MITOCHONDRIAL"/>
    <property type="match status" value="1"/>
</dbReference>
<dbReference type="Pfam" id="PF00231">
    <property type="entry name" value="ATP-synt"/>
    <property type="match status" value="1"/>
</dbReference>
<dbReference type="PRINTS" id="PR00126">
    <property type="entry name" value="ATPASEGAMMA"/>
</dbReference>
<dbReference type="SUPFAM" id="SSF52943">
    <property type="entry name" value="ATP synthase (F1-ATPase), gamma subunit"/>
    <property type="match status" value="1"/>
</dbReference>
<dbReference type="PROSITE" id="PS00153">
    <property type="entry name" value="ATPASE_GAMMA"/>
    <property type="match status" value="1"/>
</dbReference>
<comment type="function">
    <text evidence="1">Produces ATP from ADP in the presence of a proton gradient across the membrane. The gamma chain is believed to be important in regulating ATPase activity and the flow of protons through the CF(0) complex.</text>
</comment>
<comment type="subunit">
    <text evidence="1">F-type ATPases have 2 components, CF(1) - the catalytic core - and CF(0) - the membrane proton channel. CF(1) has five subunits: alpha(3), beta(3), gamma(1), delta(1), epsilon(1). CF(0) has three main subunits: a, b and c.</text>
</comment>
<comment type="subcellular location">
    <subcellularLocation>
        <location evidence="1">Cell membrane</location>
        <topology evidence="1">Peripheral membrane protein</topology>
    </subcellularLocation>
</comment>
<comment type="similarity">
    <text evidence="1">Belongs to the ATPase gamma chain family.</text>
</comment>
<accession>Q82J83</accession>
<feature type="chain" id="PRO_0000073398" description="ATP synthase gamma chain">
    <location>
        <begin position="1"/>
        <end position="305"/>
    </location>
</feature>